<sequence length="82" mass="9899">MEKLIINSMKKVFLEELKDLENELNQIFKKYNVKSKDELKKKIANGEIKEEQIKDDLERIEFLEENIERVMKCLREINVKSL</sequence>
<feature type="chain" id="PRO_0000106754" description="Uncharacterized protein MJ0235">
    <location>
        <begin position="1"/>
        <end position="82"/>
    </location>
</feature>
<protein>
    <recommendedName>
        <fullName>Uncharacterized protein MJ0235</fullName>
    </recommendedName>
</protein>
<name>Y235_METJA</name>
<keyword id="KW-1185">Reference proteome</keyword>
<proteinExistence type="predicted"/>
<accession>Q57687</accession>
<dbReference type="EMBL" id="L77117">
    <property type="protein sequence ID" value="AAB98227.1"/>
    <property type="molecule type" value="Genomic_DNA"/>
</dbReference>
<dbReference type="PIR" id="D64329">
    <property type="entry name" value="D64329"/>
</dbReference>
<dbReference type="RefSeq" id="WP_010869733.1">
    <property type="nucleotide sequence ID" value="NC_000909.1"/>
</dbReference>
<dbReference type="SMR" id="Q57687"/>
<dbReference type="STRING" id="243232.MJ_0235"/>
<dbReference type="PaxDb" id="243232-MJ_0235"/>
<dbReference type="EnsemblBacteria" id="AAB98227">
    <property type="protein sequence ID" value="AAB98227"/>
    <property type="gene ID" value="MJ_0235"/>
</dbReference>
<dbReference type="GeneID" id="1451088"/>
<dbReference type="KEGG" id="mja:MJ_0235"/>
<dbReference type="eggNOG" id="arCOG05025">
    <property type="taxonomic scope" value="Archaea"/>
</dbReference>
<dbReference type="HOGENOM" id="CLU_186521_0_0_2"/>
<dbReference type="InParanoid" id="Q57687"/>
<dbReference type="OrthoDB" id="66072at2157"/>
<dbReference type="Proteomes" id="UP000000805">
    <property type="component" value="Chromosome"/>
</dbReference>
<gene>
    <name type="ordered locus">MJ0235</name>
</gene>
<organism>
    <name type="scientific">Methanocaldococcus jannaschii (strain ATCC 43067 / DSM 2661 / JAL-1 / JCM 10045 / NBRC 100440)</name>
    <name type="common">Methanococcus jannaschii</name>
    <dbReference type="NCBI Taxonomy" id="243232"/>
    <lineage>
        <taxon>Archaea</taxon>
        <taxon>Methanobacteriati</taxon>
        <taxon>Methanobacteriota</taxon>
        <taxon>Methanomada group</taxon>
        <taxon>Methanococci</taxon>
        <taxon>Methanococcales</taxon>
        <taxon>Methanocaldococcaceae</taxon>
        <taxon>Methanocaldococcus</taxon>
    </lineage>
</organism>
<reference key="1">
    <citation type="journal article" date="1996" name="Science">
        <title>Complete genome sequence of the methanogenic archaeon, Methanococcus jannaschii.</title>
        <authorList>
            <person name="Bult C.J."/>
            <person name="White O."/>
            <person name="Olsen G.J."/>
            <person name="Zhou L."/>
            <person name="Fleischmann R.D."/>
            <person name="Sutton G.G."/>
            <person name="Blake J.A."/>
            <person name="FitzGerald L.M."/>
            <person name="Clayton R.A."/>
            <person name="Gocayne J.D."/>
            <person name="Kerlavage A.R."/>
            <person name="Dougherty B.A."/>
            <person name="Tomb J.-F."/>
            <person name="Adams M.D."/>
            <person name="Reich C.I."/>
            <person name="Overbeek R."/>
            <person name="Kirkness E.F."/>
            <person name="Weinstock K.G."/>
            <person name="Merrick J.M."/>
            <person name="Glodek A."/>
            <person name="Scott J.L."/>
            <person name="Geoghagen N.S.M."/>
            <person name="Weidman J.F."/>
            <person name="Fuhrmann J.L."/>
            <person name="Nguyen D."/>
            <person name="Utterback T.R."/>
            <person name="Kelley J.M."/>
            <person name="Peterson J.D."/>
            <person name="Sadow P.W."/>
            <person name="Hanna M.C."/>
            <person name="Cotton M.D."/>
            <person name="Roberts K.M."/>
            <person name="Hurst M.A."/>
            <person name="Kaine B.P."/>
            <person name="Borodovsky M."/>
            <person name="Klenk H.-P."/>
            <person name="Fraser C.M."/>
            <person name="Smith H.O."/>
            <person name="Woese C.R."/>
            <person name="Venter J.C."/>
        </authorList>
    </citation>
    <scope>NUCLEOTIDE SEQUENCE [LARGE SCALE GENOMIC DNA]</scope>
    <source>
        <strain>ATCC 43067 / DSM 2661 / JAL-1 / JCM 10045 / NBRC 100440</strain>
    </source>
</reference>